<gene>
    <name evidence="1" type="primary">rpsT</name>
    <name type="ordered locus">BURPS668_0919</name>
</gene>
<feature type="chain" id="PRO_1000014561" description="Small ribosomal subunit protein bS20">
    <location>
        <begin position="1"/>
        <end position="92"/>
    </location>
</feature>
<feature type="region of interest" description="Disordered" evidence="2">
    <location>
        <begin position="1"/>
        <end position="25"/>
    </location>
</feature>
<evidence type="ECO:0000255" key="1">
    <source>
        <dbReference type="HAMAP-Rule" id="MF_00500"/>
    </source>
</evidence>
<evidence type="ECO:0000256" key="2">
    <source>
        <dbReference type="SAM" id="MobiDB-lite"/>
    </source>
</evidence>
<evidence type="ECO:0000305" key="3"/>
<keyword id="KW-0687">Ribonucleoprotein</keyword>
<keyword id="KW-0689">Ribosomal protein</keyword>
<keyword id="KW-0694">RNA-binding</keyword>
<keyword id="KW-0699">rRNA-binding</keyword>
<reference key="1">
    <citation type="journal article" date="2010" name="Genome Biol. Evol.">
        <title>Continuing evolution of Burkholderia mallei through genome reduction and large-scale rearrangements.</title>
        <authorList>
            <person name="Losada L."/>
            <person name="Ronning C.M."/>
            <person name="DeShazer D."/>
            <person name="Woods D."/>
            <person name="Fedorova N."/>
            <person name="Kim H.S."/>
            <person name="Shabalina S.A."/>
            <person name="Pearson T.R."/>
            <person name="Brinkac L."/>
            <person name="Tan P."/>
            <person name="Nandi T."/>
            <person name="Crabtree J."/>
            <person name="Badger J."/>
            <person name="Beckstrom-Sternberg S."/>
            <person name="Saqib M."/>
            <person name="Schutzer S.E."/>
            <person name="Keim P."/>
            <person name="Nierman W.C."/>
        </authorList>
    </citation>
    <scope>NUCLEOTIDE SEQUENCE [LARGE SCALE GENOMIC DNA]</scope>
    <source>
        <strain>668</strain>
    </source>
</reference>
<comment type="function">
    <text evidence="1">Binds directly to 16S ribosomal RNA.</text>
</comment>
<comment type="similarity">
    <text evidence="1">Belongs to the bacterial ribosomal protein bS20 family.</text>
</comment>
<organism>
    <name type="scientific">Burkholderia pseudomallei (strain 668)</name>
    <dbReference type="NCBI Taxonomy" id="320373"/>
    <lineage>
        <taxon>Bacteria</taxon>
        <taxon>Pseudomonadati</taxon>
        <taxon>Pseudomonadota</taxon>
        <taxon>Betaproteobacteria</taxon>
        <taxon>Burkholderiales</taxon>
        <taxon>Burkholderiaceae</taxon>
        <taxon>Burkholderia</taxon>
        <taxon>pseudomallei group</taxon>
    </lineage>
</organism>
<name>RS20_BURP6</name>
<proteinExistence type="inferred from homology"/>
<sequence length="92" mass="9847">MANSAQARKRARQAAKANSHNSALRSKFRTAIKAVRKAIDAGDQAKAAELFKAATKTIDTIADKKIVHKNKAARHKSRLSAAVKGLQAQAAQ</sequence>
<dbReference type="EMBL" id="CP000570">
    <property type="protein sequence ID" value="ABN84377.1"/>
    <property type="molecule type" value="Genomic_DNA"/>
</dbReference>
<dbReference type="RefSeq" id="WP_004189743.1">
    <property type="nucleotide sequence ID" value="NC_009074.1"/>
</dbReference>
<dbReference type="SMR" id="A3N6J9"/>
<dbReference type="GeneID" id="93059378"/>
<dbReference type="KEGG" id="bpd:BURPS668_0919"/>
<dbReference type="HOGENOM" id="CLU_160655_4_0_4"/>
<dbReference type="GO" id="GO:0005829">
    <property type="term" value="C:cytosol"/>
    <property type="evidence" value="ECO:0007669"/>
    <property type="project" value="TreeGrafter"/>
</dbReference>
<dbReference type="GO" id="GO:0015935">
    <property type="term" value="C:small ribosomal subunit"/>
    <property type="evidence" value="ECO:0007669"/>
    <property type="project" value="TreeGrafter"/>
</dbReference>
<dbReference type="GO" id="GO:0070181">
    <property type="term" value="F:small ribosomal subunit rRNA binding"/>
    <property type="evidence" value="ECO:0007669"/>
    <property type="project" value="TreeGrafter"/>
</dbReference>
<dbReference type="GO" id="GO:0003735">
    <property type="term" value="F:structural constituent of ribosome"/>
    <property type="evidence" value="ECO:0007669"/>
    <property type="project" value="InterPro"/>
</dbReference>
<dbReference type="GO" id="GO:0006412">
    <property type="term" value="P:translation"/>
    <property type="evidence" value="ECO:0007669"/>
    <property type="project" value="UniProtKB-UniRule"/>
</dbReference>
<dbReference type="FunFam" id="1.20.58.110:FF:000001">
    <property type="entry name" value="30S ribosomal protein S20"/>
    <property type="match status" value="1"/>
</dbReference>
<dbReference type="Gene3D" id="1.20.58.110">
    <property type="entry name" value="Ribosomal protein S20"/>
    <property type="match status" value="1"/>
</dbReference>
<dbReference type="HAMAP" id="MF_00500">
    <property type="entry name" value="Ribosomal_bS20"/>
    <property type="match status" value="1"/>
</dbReference>
<dbReference type="InterPro" id="IPR002583">
    <property type="entry name" value="Ribosomal_bS20"/>
</dbReference>
<dbReference type="InterPro" id="IPR036510">
    <property type="entry name" value="Ribosomal_bS20_sf"/>
</dbReference>
<dbReference type="NCBIfam" id="TIGR00029">
    <property type="entry name" value="S20"/>
    <property type="match status" value="1"/>
</dbReference>
<dbReference type="PANTHER" id="PTHR33398">
    <property type="entry name" value="30S RIBOSOMAL PROTEIN S20"/>
    <property type="match status" value="1"/>
</dbReference>
<dbReference type="PANTHER" id="PTHR33398:SF1">
    <property type="entry name" value="SMALL RIBOSOMAL SUBUNIT PROTEIN BS20C"/>
    <property type="match status" value="1"/>
</dbReference>
<dbReference type="Pfam" id="PF01649">
    <property type="entry name" value="Ribosomal_S20p"/>
    <property type="match status" value="1"/>
</dbReference>
<dbReference type="SUPFAM" id="SSF46992">
    <property type="entry name" value="Ribosomal protein S20"/>
    <property type="match status" value="1"/>
</dbReference>
<protein>
    <recommendedName>
        <fullName evidence="1">Small ribosomal subunit protein bS20</fullName>
    </recommendedName>
    <alternativeName>
        <fullName evidence="3">30S ribosomal protein S20</fullName>
    </alternativeName>
</protein>
<accession>A3N6J9</accession>